<comment type="function">
    <text evidence="1">Part of the twin-arginine translocation (Tat) system that transports large folded proteins containing a characteristic twin-arginine motif in their signal peptide across membranes. TatA could form the protein-conducting channel of the Tat system.</text>
</comment>
<comment type="subunit">
    <text evidence="1">The Tat system comprises two distinct complexes: a TatABC complex, containing multiple copies of TatA, TatB and TatC subunits, and a separate TatA complex, containing only TatA subunits. Substrates initially bind to the TatABC complex, which probably triggers association of the separate TatA complex to form the active translocon.</text>
</comment>
<comment type="subcellular location">
    <subcellularLocation>
        <location evidence="1">Cell inner membrane</location>
        <topology evidence="1">Single-pass membrane protein</topology>
    </subcellularLocation>
</comment>
<comment type="similarity">
    <text evidence="1">Belongs to the TatA/E family.</text>
</comment>
<accession>Q5X0X3</accession>
<feature type="chain" id="PRO_0000336631" description="Sec-independent protein translocase protein TatA">
    <location>
        <begin position="1"/>
        <end position="61"/>
    </location>
</feature>
<feature type="transmembrane region" description="Helical" evidence="1">
    <location>
        <begin position="2"/>
        <end position="22"/>
    </location>
</feature>
<keyword id="KW-0997">Cell inner membrane</keyword>
<keyword id="KW-1003">Cell membrane</keyword>
<keyword id="KW-0472">Membrane</keyword>
<keyword id="KW-0653">Protein transport</keyword>
<keyword id="KW-0811">Translocation</keyword>
<keyword id="KW-0812">Transmembrane</keyword>
<keyword id="KW-1133">Transmembrane helix</keyword>
<keyword id="KW-0813">Transport</keyword>
<protein>
    <recommendedName>
        <fullName evidence="1">Sec-independent protein translocase protein TatA</fullName>
    </recommendedName>
</protein>
<proteinExistence type="inferred from homology"/>
<evidence type="ECO:0000255" key="1">
    <source>
        <dbReference type="HAMAP-Rule" id="MF_00236"/>
    </source>
</evidence>
<sequence>MGLSGISPLSLLLILAIIVALFGTSKLKTIGSDLGEAIKNFRKAMNSEETNDTQKDDHKPS</sequence>
<reference key="1">
    <citation type="journal article" date="2004" name="Nat. Genet.">
        <title>Evidence in the Legionella pneumophila genome for exploitation of host cell functions and high genome plasticity.</title>
        <authorList>
            <person name="Cazalet C."/>
            <person name="Rusniok C."/>
            <person name="Brueggemann H."/>
            <person name="Zidane N."/>
            <person name="Magnier A."/>
            <person name="Ma L."/>
            <person name="Tichit M."/>
            <person name="Jarraud S."/>
            <person name="Bouchier C."/>
            <person name="Vandenesch F."/>
            <person name="Kunst F."/>
            <person name="Etienne J."/>
            <person name="Glaser P."/>
            <person name="Buchrieser C."/>
        </authorList>
    </citation>
    <scope>NUCLEOTIDE SEQUENCE [LARGE SCALE GENOMIC DNA]</scope>
    <source>
        <strain>Paris</strain>
    </source>
</reference>
<gene>
    <name evidence="1" type="primary">tatA</name>
    <name type="ordered locus">lpp2973</name>
</gene>
<organism>
    <name type="scientific">Legionella pneumophila (strain Paris)</name>
    <dbReference type="NCBI Taxonomy" id="297246"/>
    <lineage>
        <taxon>Bacteria</taxon>
        <taxon>Pseudomonadati</taxon>
        <taxon>Pseudomonadota</taxon>
        <taxon>Gammaproteobacteria</taxon>
        <taxon>Legionellales</taxon>
        <taxon>Legionellaceae</taxon>
        <taxon>Legionella</taxon>
    </lineage>
</organism>
<name>TATA_LEGPA</name>
<dbReference type="EMBL" id="CR628336">
    <property type="protein sequence ID" value="CAH14126.1"/>
    <property type="molecule type" value="Genomic_DNA"/>
</dbReference>
<dbReference type="RefSeq" id="WP_011216738.1">
    <property type="nucleotide sequence ID" value="NC_006368.1"/>
</dbReference>
<dbReference type="SMR" id="Q5X0X3"/>
<dbReference type="KEGG" id="lpp:lpp2973"/>
<dbReference type="LegioList" id="lpp2973"/>
<dbReference type="HOGENOM" id="CLU_086034_6_1_6"/>
<dbReference type="GO" id="GO:0033281">
    <property type="term" value="C:TAT protein transport complex"/>
    <property type="evidence" value="ECO:0007669"/>
    <property type="project" value="UniProtKB-UniRule"/>
</dbReference>
<dbReference type="GO" id="GO:0008320">
    <property type="term" value="F:protein transmembrane transporter activity"/>
    <property type="evidence" value="ECO:0007669"/>
    <property type="project" value="UniProtKB-UniRule"/>
</dbReference>
<dbReference type="GO" id="GO:0043953">
    <property type="term" value="P:protein transport by the Tat complex"/>
    <property type="evidence" value="ECO:0007669"/>
    <property type="project" value="UniProtKB-UniRule"/>
</dbReference>
<dbReference type="Gene3D" id="1.20.5.3310">
    <property type="match status" value="1"/>
</dbReference>
<dbReference type="HAMAP" id="MF_00236">
    <property type="entry name" value="TatA_E"/>
    <property type="match status" value="1"/>
</dbReference>
<dbReference type="InterPro" id="IPR003369">
    <property type="entry name" value="TatA/B/E"/>
</dbReference>
<dbReference type="InterPro" id="IPR006312">
    <property type="entry name" value="TatA/E"/>
</dbReference>
<dbReference type="NCBIfam" id="TIGR01411">
    <property type="entry name" value="tatAE"/>
    <property type="match status" value="1"/>
</dbReference>
<dbReference type="PANTHER" id="PTHR42982">
    <property type="entry name" value="SEC-INDEPENDENT PROTEIN TRANSLOCASE PROTEIN TATA"/>
    <property type="match status" value="1"/>
</dbReference>
<dbReference type="PANTHER" id="PTHR42982:SF1">
    <property type="entry name" value="SEC-INDEPENDENT PROTEIN TRANSLOCASE PROTEIN TATA"/>
    <property type="match status" value="1"/>
</dbReference>
<dbReference type="Pfam" id="PF02416">
    <property type="entry name" value="TatA_B_E"/>
    <property type="match status" value="1"/>
</dbReference>